<gene>
    <name evidence="1" type="primary">ef1b</name>
    <name type="ordered locus">Mbar_A3440</name>
</gene>
<evidence type="ECO:0000255" key="1">
    <source>
        <dbReference type="HAMAP-Rule" id="MF_00043"/>
    </source>
</evidence>
<protein>
    <recommendedName>
        <fullName evidence="1">Elongation factor 1-beta</fullName>
        <shortName evidence="1">EF-1-beta</shortName>
    </recommendedName>
    <alternativeName>
        <fullName evidence="1">aEF-1beta</fullName>
    </alternativeName>
</protein>
<keyword id="KW-0251">Elongation factor</keyword>
<keyword id="KW-0648">Protein biosynthesis</keyword>
<name>EF1B_METBF</name>
<accession>Q465X9</accession>
<feature type="chain" id="PRO_0000366434" description="Elongation factor 1-beta">
    <location>
        <begin position="1"/>
        <end position="89"/>
    </location>
</feature>
<reference key="1">
    <citation type="journal article" date="2006" name="J. Bacteriol.">
        <title>The Methanosarcina barkeri genome: comparative analysis with Methanosarcina acetivorans and Methanosarcina mazei reveals extensive rearrangement within methanosarcinal genomes.</title>
        <authorList>
            <person name="Maeder D.L."/>
            <person name="Anderson I."/>
            <person name="Brettin T.S."/>
            <person name="Bruce D.C."/>
            <person name="Gilna P."/>
            <person name="Han C.S."/>
            <person name="Lapidus A."/>
            <person name="Metcalf W.W."/>
            <person name="Saunders E."/>
            <person name="Tapia R."/>
            <person name="Sowers K.R."/>
        </authorList>
    </citation>
    <scope>NUCLEOTIDE SEQUENCE [LARGE SCALE GENOMIC DNA]</scope>
    <source>
        <strain>Fusaro / DSM 804</strain>
    </source>
</reference>
<dbReference type="EMBL" id="CP000099">
    <property type="protein sequence ID" value="AAZ72313.1"/>
    <property type="molecule type" value="Genomic_DNA"/>
</dbReference>
<dbReference type="SMR" id="Q465X9"/>
<dbReference type="STRING" id="269797.Mbar_A3440"/>
<dbReference type="PaxDb" id="269797-Mbar_A3440"/>
<dbReference type="KEGG" id="mba:Mbar_A3440"/>
<dbReference type="eggNOG" id="arCOG01988">
    <property type="taxonomic scope" value="Archaea"/>
</dbReference>
<dbReference type="HOGENOM" id="CLU_165896_0_0_2"/>
<dbReference type="OrthoDB" id="84643at2157"/>
<dbReference type="GO" id="GO:0003746">
    <property type="term" value="F:translation elongation factor activity"/>
    <property type="evidence" value="ECO:0007669"/>
    <property type="project" value="UniProtKB-UniRule"/>
</dbReference>
<dbReference type="CDD" id="cd00292">
    <property type="entry name" value="EF1B"/>
    <property type="match status" value="1"/>
</dbReference>
<dbReference type="Gene3D" id="3.30.70.60">
    <property type="match status" value="1"/>
</dbReference>
<dbReference type="HAMAP" id="MF_00043">
    <property type="entry name" value="EF1_beta"/>
    <property type="match status" value="1"/>
</dbReference>
<dbReference type="InterPro" id="IPR036219">
    <property type="entry name" value="eEF-1beta-like_sf"/>
</dbReference>
<dbReference type="InterPro" id="IPR014038">
    <property type="entry name" value="EF1B_bsu/dsu_GNE"/>
</dbReference>
<dbReference type="InterPro" id="IPR014717">
    <property type="entry name" value="Transl_elong_EF1B/ribsomal_bS6"/>
</dbReference>
<dbReference type="InterPro" id="IPR004542">
    <property type="entry name" value="Transl_elong_EF1B_B_arc"/>
</dbReference>
<dbReference type="NCBIfam" id="TIGR00489">
    <property type="entry name" value="aEF-1_beta"/>
    <property type="match status" value="1"/>
</dbReference>
<dbReference type="NCBIfam" id="NF001670">
    <property type="entry name" value="PRK00435.1"/>
    <property type="match status" value="1"/>
</dbReference>
<dbReference type="PANTHER" id="PTHR39647">
    <property type="entry name" value="ELONGATION FACTOR 1-BETA"/>
    <property type="match status" value="1"/>
</dbReference>
<dbReference type="PANTHER" id="PTHR39647:SF1">
    <property type="entry name" value="ELONGATION FACTOR 1-BETA"/>
    <property type="match status" value="1"/>
</dbReference>
<dbReference type="Pfam" id="PF00736">
    <property type="entry name" value="EF1_GNE"/>
    <property type="match status" value="1"/>
</dbReference>
<dbReference type="PIRSF" id="PIRSF006521">
    <property type="entry name" value="Transl_elong_EF1B_B_arc"/>
    <property type="match status" value="1"/>
</dbReference>
<dbReference type="SMART" id="SM00888">
    <property type="entry name" value="EF1_GNE"/>
    <property type="match status" value="1"/>
</dbReference>
<dbReference type="SUPFAM" id="SSF54984">
    <property type="entry name" value="eEF-1beta-like"/>
    <property type="match status" value="1"/>
</dbReference>
<sequence>MGDVAAKIKIMPESVDTDLGELKEKIKGVIPAGADLHGDIVEEPIAFGLKALIVTLIVNDEEGGTEPAEEAFAKVSGVENVQVVDVYRI</sequence>
<organism>
    <name type="scientific">Methanosarcina barkeri (strain Fusaro / DSM 804)</name>
    <dbReference type="NCBI Taxonomy" id="269797"/>
    <lineage>
        <taxon>Archaea</taxon>
        <taxon>Methanobacteriati</taxon>
        <taxon>Methanobacteriota</taxon>
        <taxon>Stenosarchaea group</taxon>
        <taxon>Methanomicrobia</taxon>
        <taxon>Methanosarcinales</taxon>
        <taxon>Methanosarcinaceae</taxon>
        <taxon>Methanosarcina</taxon>
    </lineage>
</organism>
<comment type="function">
    <text evidence="1">Promotes the exchange of GDP for GTP in EF-1-alpha/GDP, thus allowing the regeneration of EF-1-alpha/GTP that could then be used to form the ternary complex EF-1-alpha/GTP/AAtRNA.</text>
</comment>
<comment type="similarity">
    <text evidence="1">Belongs to the EF-1-beta/EF-1-delta family.</text>
</comment>
<proteinExistence type="inferred from homology"/>